<proteinExistence type="evidence at protein level"/>
<feature type="transit peptide" description="Mitochondrion" evidence="2">
    <location>
        <begin position="1"/>
        <end position="34"/>
    </location>
</feature>
<feature type="chain" id="PRO_0000228623" description="4-hydroxybenzoate polyprenyltransferase, mitochondrial" evidence="2">
    <location>
        <begin position="35"/>
        <end position="371"/>
    </location>
</feature>
<feature type="topological domain" description="Mitochondrial matrix" evidence="23">
    <location>
        <begin position="35"/>
        <end position="83"/>
    </location>
</feature>
<feature type="transmembrane region" description="Helical" evidence="2">
    <location>
        <begin position="84"/>
        <end position="104"/>
    </location>
</feature>
<feature type="topological domain" description="Mitochondrial intermembrane" evidence="23">
    <location>
        <begin position="105"/>
        <end position="108"/>
    </location>
</feature>
<feature type="transmembrane region" description="Helical" evidence="2">
    <location>
        <begin position="109"/>
        <end position="129"/>
    </location>
</feature>
<feature type="topological domain" description="Mitochondrial matrix" evidence="23">
    <location>
        <begin position="130"/>
        <end position="148"/>
    </location>
</feature>
<feature type="transmembrane region" description="Helical" evidence="2">
    <location>
        <begin position="149"/>
        <end position="169"/>
    </location>
</feature>
<feature type="topological domain" description="Mitochondrial intermembrane" evidence="23">
    <location>
        <begin position="170"/>
        <end position="172"/>
    </location>
</feature>
<feature type="transmembrane region" description="Helical" evidence="2">
    <location>
        <begin position="173"/>
        <end position="193"/>
    </location>
</feature>
<feature type="topological domain" description="Mitochondrial matrix" evidence="23">
    <location>
        <begin position="194"/>
        <end position="203"/>
    </location>
</feature>
<feature type="transmembrane region" description="Helical" evidence="2">
    <location>
        <begin position="204"/>
        <end position="224"/>
    </location>
</feature>
<feature type="topological domain" description="Mitochondrial intermembrane" evidence="23">
    <location>
        <begin position="225"/>
        <end position="231"/>
    </location>
</feature>
<feature type="transmembrane region" description="Helical" evidence="2">
    <location>
        <begin position="232"/>
        <end position="252"/>
    </location>
</feature>
<feature type="topological domain" description="Mitochondrial matrix" evidence="23">
    <location>
        <begin position="253"/>
        <end position="277"/>
    </location>
</feature>
<feature type="transmembrane region" description="Helical" evidence="2">
    <location>
        <begin position="278"/>
        <end position="298"/>
    </location>
</feature>
<feature type="topological domain" description="Mitochondrial intermembrane" evidence="23">
    <location>
        <begin position="299"/>
        <end position="300"/>
    </location>
</feature>
<feature type="transmembrane region" description="Helical" evidence="2">
    <location>
        <begin position="301"/>
        <end position="321"/>
    </location>
</feature>
<feature type="topological domain" description="Mitochondrial matrix" evidence="23">
    <location>
        <begin position="322"/>
        <end position="332"/>
    </location>
</feature>
<feature type="transmembrane region" description="Helical" evidence="2">
    <location>
        <begin position="333"/>
        <end position="353"/>
    </location>
</feature>
<feature type="topological domain" description="Mitochondrial intermembrane" evidence="12">
    <location>
        <begin position="354"/>
        <end position="371"/>
    </location>
</feature>
<feature type="splice variant" id="VSP_061606" description="In isoform 4." evidence="23">
    <original>M</original>
    <variation>MTPISQVRMRKGSAHTAAQPGRLGLHPAGATAHACRGMTSIRARPGLTSAM</variation>
    <location>
        <position position="1"/>
    </location>
</feature>
<feature type="splice variant" id="VSP_061607" description="In isoform 5." evidence="23">
    <original>M</original>
    <variation>MRKGSAHTAAQPGRLGLHPAGATAHACRGMTSIRARPGLTSAM</variation>
    <location>
        <position position="1"/>
    </location>
</feature>
<feature type="splice variant" id="VSP_061608" description="In isoform 6." evidence="23">
    <original>M</original>
    <variation>MTSIRARPGLTSAM</variation>
    <location>
        <position position="1"/>
    </location>
</feature>
<feature type="splice variant" id="VSP_017677" description="In isoform 3." evidence="18 19">
    <original>IYTLDIHRPEDCWNKFI</original>
    <variation>KWGLEILPRLV</variation>
    <location>
        <begin position="318"/>
        <end position="334"/>
    </location>
</feature>
<feature type="splice variant" id="VSP_017678" description="In isoform 3." evidence="18 19">
    <location>
        <begin position="335"/>
        <end position="371"/>
    </location>
</feature>
<feature type="sequence variant" id="VAR_070237" description="In dbSNP:rs6818847." evidence="3 4 10">
    <original>V</original>
    <variation>L</variation>
    <location>
        <position position="16"/>
    </location>
</feature>
<feature type="sequence variant" id="VAR_070238" description="In dbSNP:rs765747895." evidence="10">
    <original>P</original>
    <variation>L</variation>
    <location>
        <position position="22"/>
    </location>
</feature>
<feature type="sequence variant" id="VAR_070239" description="In MSA1; associated with disease susceptibility; dbSNP:rs863223933." evidence="10">
    <original>F</original>
    <variation>L</variation>
    <location>
        <position position="29"/>
    </location>
</feature>
<feature type="sequence variant" id="VAR_070240" description="In MSA1; associated with disease susceptibility; dbSNP:rs936872920." evidence="10">
    <original>P</original>
    <variation>H</variation>
    <location>
        <position position="49"/>
    </location>
</feature>
<feature type="sequence variant" id="VAR_089039" description="In COQ10D1; uncertain significance." evidence="14">
    <original>G</original>
    <variation>S</variation>
    <location>
        <position position="53"/>
    </location>
</feature>
<feature type="sequence variant" id="VAR_070241" description="In MSA1; associated with disease susceptibility; dbSNP:rs550949678." evidence="10">
    <original>S</original>
    <variation>T</variation>
    <location>
        <position position="57"/>
    </location>
</feature>
<feature type="sequence variant" id="VAR_070242" description="In dbSNP:rs762399579." evidence="10">
    <original>R</original>
    <variation>H</variation>
    <location>
        <position position="69"/>
    </location>
</feature>
<feature type="sequence variant" id="VAR_070243" description="In MSA1; associated with disease susceptibility; decreased ubiquinone biosynthesis; dbSNP:rs778094136." evidence="10 12">
    <original>M</original>
    <variation>V</variation>
    <location>
        <position position="78"/>
    </location>
</feature>
<feature type="sequence variant" id="VAR_068161" description="In COQ10D1; decreased ubiquinone biosynthesis; dbSNP:rs121918233." evidence="7 12">
    <original>S</original>
    <variation>N</variation>
    <location>
        <position position="96"/>
    </location>
</feature>
<feature type="sequence variant" id="VAR_070244" description="In MSA1; associated with disease susceptibility; dbSNP:rs944546272." evidence="10">
    <original>I</original>
    <variation>T</variation>
    <location>
        <position position="97"/>
    </location>
</feature>
<feature type="sequence variant" id="VAR_070245" description="In MSA1; associated with disease susceptibility; dbSNP:rs1462568548." evidence="10">
    <original>P</original>
    <variation>S</variation>
    <location>
        <position position="107"/>
    </location>
</feature>
<feature type="sequence variant" id="VAR_070246" description="In MSA1; associated with disease susceptibility; dbSNP:rs1735249512." evidence="10">
    <original>S</original>
    <variation>F</variation>
    <location>
        <position position="113"/>
    </location>
</feature>
<feature type="sequence variant" id="VAR_076913" description="In COQ10D1; decreased ubiquinone biosynthesis; dbSNP:rs1057519348." evidence="11 12">
    <original>M</original>
    <variation>R</variation>
    <location>
        <position position="132"/>
    </location>
</feature>
<feature type="sequence variant" id="VAR_068162" description="In COQ10D1; loss of ubiquinone biosynthesis; dbSNP:rs121918231." evidence="7 12">
    <original>R</original>
    <variation>H</variation>
    <location>
        <position position="147"/>
    </location>
</feature>
<feature type="sequence variant" id="VAR_068163" description="In COQ10D1; decreased ubiquinone biosynthesis; dbSNP:rs121918232." evidence="7 12">
    <original>N</original>
    <variation>S</variation>
    <location>
        <position position="178"/>
    </location>
</feature>
<feature type="sequence variant" id="VAR_025701" description="In COQ10D1; decreased 4-hydroxybenzoate decaprenyltransferase activity; dbSNP:rs121918230." evidence="5 6 7 12">
    <original>Y</original>
    <variation>C</variation>
    <location>
        <position position="247"/>
    </location>
</feature>
<feature type="sequence variant" id="VAR_076914" description="In COQ10D1; loss of ubiquinone biosynthesis; dbSNP:rs762616589." evidence="9 12">
    <original>A</original>
    <variation>V</variation>
    <location>
        <position position="252"/>
    </location>
</feature>
<feature type="sequence variant" id="VAR_070247" description="In MSA1; associated with disease susceptibility; dbSNP:rs369627290." evidence="10">
    <original>T</original>
    <variation>A</variation>
    <location>
        <position position="267"/>
    </location>
</feature>
<feature type="sequence variant" id="VAR_070248" description="In MSA1; associated with disease susceptibility; dbSNP:rs566845170." evidence="10">
    <original>S</original>
    <variation>C</variation>
    <location>
        <position position="297"/>
    </location>
</feature>
<feature type="sequence variant" id="VAR_070249" description="In dbSNP:rs1734859571." evidence="10">
    <original>N</original>
    <variation>H</variation>
    <location>
        <position position="336"/>
    </location>
</feature>
<feature type="sequence variant" id="VAR_070250" description="In MSA1; associated with disease susceptibility; dbSNP:rs763562410." evidence="10">
    <original>R</original>
    <variation>Q</variation>
    <location>
        <position position="337"/>
    </location>
</feature>
<feature type="sequence variant" id="VAR_078121" description="In COQ10D1; uncertain significance; dbSNP:rs752608037." evidence="13">
    <original>G</original>
    <variation>A</variation>
    <location>
        <position position="340"/>
    </location>
</feature>
<feature type="sequence variant" id="VAR_070251" description="In MSA1; associated with disease susceptibility; dbSNP:rs148156462." evidence="10">
    <original>V</original>
    <variation>A</variation>
    <location>
        <position position="343"/>
    </location>
</feature>
<keyword id="KW-0024">Alternative initiation</keyword>
<keyword id="KW-0025">Alternative splicing</keyword>
<keyword id="KW-0225">Disease variant</keyword>
<keyword id="KW-0414">Isoprene biosynthesis</keyword>
<keyword id="KW-0472">Membrane</keyword>
<keyword id="KW-0496">Mitochondrion</keyword>
<keyword id="KW-0999">Mitochondrion inner membrane</keyword>
<keyword id="KW-0523">Neurodegeneration</keyword>
<keyword id="KW-0908">Parkinsonism</keyword>
<keyword id="KW-1274">Primary mitochondrial disease</keyword>
<keyword id="KW-1267">Proteomics identification</keyword>
<keyword id="KW-1185">Reference proteome</keyword>
<keyword id="KW-0808">Transferase</keyword>
<keyword id="KW-0809">Transit peptide</keyword>
<keyword id="KW-0812">Transmembrane</keyword>
<keyword id="KW-1133">Transmembrane helix</keyword>
<keyword id="KW-0831">Ubiquinone biosynthesis</keyword>
<name>COQ2_HUMAN</name>
<protein>
    <recommendedName>
        <fullName evidence="2">4-hydroxybenzoate polyprenyltransferase, mitochondrial</fullName>
        <shortName evidence="2">4-HB polyprenyltransferase</shortName>
        <ecNumber evidence="3 5 6">2.5.1.39</ecNumber>
    </recommendedName>
    <alternativeName>
        <fullName evidence="15">4-hydroxybenzoate decaprenyltransferase</fullName>
    </alternativeName>
    <alternativeName>
        <fullName>COQ2 homolog</fullName>
        <shortName evidence="15">hCOQ2</shortName>
    </alternativeName>
    <alternativeName>
        <fullName evidence="16">Para-hydroxybenzoate--polyprenyltransferase</fullName>
        <shortName evidence="2">PHB:PPT</shortName>
        <shortName evidence="2">PHB:polyprenyltransferase</shortName>
    </alternativeName>
</protein>
<dbReference type="EC" id="2.5.1.39" evidence="3 5 6"/>
<dbReference type="EMBL" id="AJ621061">
    <property type="protein sequence ID" value="CAF18241.1"/>
    <property type="molecule type" value="mRNA"/>
</dbReference>
<dbReference type="EMBL" id="KU877220">
    <property type="protein sequence ID" value="AOT85942.1"/>
    <property type="molecule type" value="mRNA"/>
</dbReference>
<dbReference type="EMBL" id="AC114781">
    <property type="status" value="NOT_ANNOTATED_CDS"/>
    <property type="molecule type" value="Genomic_DNA"/>
</dbReference>
<dbReference type="EMBL" id="BC008804">
    <property type="protein sequence ID" value="AAH08804.1"/>
    <property type="molecule type" value="mRNA"/>
</dbReference>
<dbReference type="EMBL" id="BC020728">
    <property type="protein sequence ID" value="AAH20728.2"/>
    <property type="status" value="ALT_INIT"/>
    <property type="molecule type" value="mRNA"/>
</dbReference>
<dbReference type="EMBL" id="BC116454">
    <property type="protein sequence ID" value="AAI16455.1"/>
    <property type="molecule type" value="mRNA"/>
</dbReference>
<dbReference type="EMBL" id="AF091086">
    <property type="protein sequence ID" value="AAC72955.1"/>
    <property type="status" value="ALT_FRAME"/>
    <property type="molecule type" value="mRNA"/>
</dbReference>
<dbReference type="EMBL" id="CR456860">
    <property type="protein sequence ID" value="CAG33141.1"/>
    <property type="molecule type" value="mRNA"/>
</dbReference>
<dbReference type="CCDS" id="CCDS47090.2">
    <molecule id="Q96H96-4"/>
</dbReference>
<dbReference type="CCDS" id="CCDS87234.1">
    <molecule id="Q96H96-1"/>
</dbReference>
<dbReference type="RefSeq" id="NP_001345850.1">
    <molecule id="Q96H96-1"/>
    <property type="nucleotide sequence ID" value="NM_001358921.2"/>
</dbReference>
<dbReference type="RefSeq" id="NP_056512.5">
    <molecule id="Q96H96-4"/>
    <property type="nucleotide sequence ID" value="NM_015697.7"/>
</dbReference>
<dbReference type="SMR" id="Q96H96"/>
<dbReference type="BioGRID" id="118083">
    <property type="interactions" value="94"/>
</dbReference>
<dbReference type="FunCoup" id="Q96H96">
    <property type="interactions" value="529"/>
</dbReference>
<dbReference type="IntAct" id="Q96H96">
    <property type="interactions" value="90"/>
</dbReference>
<dbReference type="STRING" id="9606.ENSP00000310873"/>
<dbReference type="iPTMnet" id="Q96H96"/>
<dbReference type="PhosphoSitePlus" id="Q96H96"/>
<dbReference type="BioMuta" id="COQ2"/>
<dbReference type="DMDM" id="74731901"/>
<dbReference type="jPOST" id="Q96H96"/>
<dbReference type="MassIVE" id="Q96H96"/>
<dbReference type="PaxDb" id="9606-ENSP00000310873"/>
<dbReference type="PeptideAtlas" id="Q96H96"/>
<dbReference type="ProteomicsDB" id="76713">
    <molecule id="Q96H96-1"/>
</dbReference>
<dbReference type="ProteomicsDB" id="76714">
    <molecule id="Q96H96-3"/>
</dbReference>
<dbReference type="Antibodypedia" id="25200">
    <property type="antibodies" value="58 antibodies from 18 providers"/>
</dbReference>
<dbReference type="DNASU" id="27235"/>
<dbReference type="Ensembl" id="ENST00000311461.7">
    <molecule id="Q96H96-3"/>
    <property type="protein sequence ID" value="ENSP00000311835.7"/>
    <property type="gene ID" value="ENSG00000173085.15"/>
</dbReference>
<dbReference type="Ensembl" id="ENST00000311469.9">
    <molecule id="Q96H96-4"/>
    <property type="protein sequence ID" value="ENSP00000310873.4"/>
    <property type="gene ID" value="ENSG00000173085.15"/>
</dbReference>
<dbReference type="Ensembl" id="ENST00000647002.2">
    <molecule id="Q96H96-1"/>
    <property type="protein sequence ID" value="ENSP00000495761.2"/>
    <property type="gene ID" value="ENSG00000173085.15"/>
</dbReference>
<dbReference type="GeneID" id="27235"/>
<dbReference type="KEGG" id="hsa:27235"/>
<dbReference type="MANE-Select" id="ENST00000647002.2">
    <property type="protein sequence ID" value="ENSP00000495761.2"/>
    <property type="RefSeq nucleotide sequence ID" value="NM_001358921.2"/>
    <property type="RefSeq protein sequence ID" value="NP_001345850.1"/>
</dbReference>
<dbReference type="UCSC" id="uc003hog.3">
    <molecule id="Q96H96-1"/>
    <property type="organism name" value="human"/>
</dbReference>
<dbReference type="AGR" id="HGNC:25223"/>
<dbReference type="CTD" id="27235"/>
<dbReference type="DisGeNET" id="27235"/>
<dbReference type="GeneCards" id="COQ2"/>
<dbReference type="GeneReviews" id="COQ2"/>
<dbReference type="HGNC" id="HGNC:25223">
    <property type="gene designation" value="COQ2"/>
</dbReference>
<dbReference type="HPA" id="ENSG00000173085">
    <property type="expression patterns" value="Tissue enhanced (tongue)"/>
</dbReference>
<dbReference type="MalaCards" id="COQ2"/>
<dbReference type="MIM" id="146500">
    <property type="type" value="phenotype"/>
</dbReference>
<dbReference type="MIM" id="607426">
    <property type="type" value="phenotype"/>
</dbReference>
<dbReference type="MIM" id="609825">
    <property type="type" value="gene"/>
</dbReference>
<dbReference type="neXtProt" id="NX_Q96H96"/>
<dbReference type="OpenTargets" id="ENSG00000173085"/>
<dbReference type="Orphanet" id="227510">
    <property type="disease" value="Multiple system atrophy, cerebellar type"/>
</dbReference>
<dbReference type="Orphanet" id="98933">
    <property type="disease" value="Multiple system atrophy, parkinsonian type"/>
</dbReference>
<dbReference type="PharmGKB" id="PA142672084"/>
<dbReference type="VEuPathDB" id="HostDB:ENSG00000173085"/>
<dbReference type="eggNOG" id="KOG1381">
    <property type="taxonomic scope" value="Eukaryota"/>
</dbReference>
<dbReference type="GeneTree" id="ENSGT00940000153771"/>
<dbReference type="InParanoid" id="Q96H96"/>
<dbReference type="OrthoDB" id="18170at2759"/>
<dbReference type="PAN-GO" id="Q96H96">
    <property type="GO annotations" value="3 GO annotations based on evolutionary models"/>
</dbReference>
<dbReference type="PhylomeDB" id="Q96H96"/>
<dbReference type="TreeFam" id="TF105873"/>
<dbReference type="BioCyc" id="MetaCyc:ENSG00000173085-MONOMER"/>
<dbReference type="BRENDA" id="2.5.1.39">
    <property type="organism ID" value="2681"/>
</dbReference>
<dbReference type="PathwayCommons" id="Q96H96"/>
<dbReference type="Reactome" id="R-HSA-1268020">
    <property type="pathway name" value="Mitochondrial protein import"/>
</dbReference>
<dbReference type="Reactome" id="R-HSA-2142789">
    <property type="pathway name" value="Ubiquinol biosynthesis"/>
</dbReference>
<dbReference type="SignaLink" id="Q96H96"/>
<dbReference type="UniPathway" id="UPA00232"/>
<dbReference type="BioGRID-ORCS" id="27235">
    <property type="hits" value="309 hits in 1157 CRISPR screens"/>
</dbReference>
<dbReference type="ChiTaRS" id="COQ2">
    <property type="organism name" value="human"/>
</dbReference>
<dbReference type="GeneWiki" id="COQ2"/>
<dbReference type="GenomeRNAi" id="27235"/>
<dbReference type="Pharos" id="Q96H96">
    <property type="development level" value="Tbio"/>
</dbReference>
<dbReference type="PRO" id="PR:Q96H96"/>
<dbReference type="Proteomes" id="UP000005640">
    <property type="component" value="Chromosome 4"/>
</dbReference>
<dbReference type="RNAct" id="Q96H96">
    <property type="molecule type" value="protein"/>
</dbReference>
<dbReference type="Bgee" id="ENSG00000173085">
    <property type="expression patterns" value="Expressed in skeletal muscle tissue of biceps brachii and 197 other cell types or tissues"/>
</dbReference>
<dbReference type="ExpressionAtlas" id="Q96H96">
    <property type="expression patterns" value="baseline and differential"/>
</dbReference>
<dbReference type="GO" id="GO:0031314">
    <property type="term" value="C:extrinsic component of mitochondrial inner membrane"/>
    <property type="evidence" value="ECO:0007669"/>
    <property type="project" value="Ensembl"/>
</dbReference>
<dbReference type="GO" id="GO:0005743">
    <property type="term" value="C:mitochondrial inner membrane"/>
    <property type="evidence" value="ECO:0000314"/>
    <property type="project" value="UniProtKB"/>
</dbReference>
<dbReference type="GO" id="GO:0005739">
    <property type="term" value="C:mitochondrion"/>
    <property type="evidence" value="ECO:0006056"/>
    <property type="project" value="FlyBase"/>
</dbReference>
<dbReference type="GO" id="GO:0008412">
    <property type="term" value="F:4-hydroxybenzoate polyprenyltransferase activity"/>
    <property type="evidence" value="ECO:0000315"/>
    <property type="project" value="UniProtKB"/>
</dbReference>
<dbReference type="GO" id="GO:0004659">
    <property type="term" value="F:prenyltransferase activity"/>
    <property type="evidence" value="ECO:0000316"/>
    <property type="project" value="MGI"/>
</dbReference>
<dbReference type="GO" id="GO:0006071">
    <property type="term" value="P:glycerol metabolic process"/>
    <property type="evidence" value="ECO:0000316"/>
    <property type="project" value="UniProtKB"/>
</dbReference>
<dbReference type="GO" id="GO:0008299">
    <property type="term" value="P:isoprenoid biosynthetic process"/>
    <property type="evidence" value="ECO:0007669"/>
    <property type="project" value="UniProtKB-UniRule"/>
</dbReference>
<dbReference type="GO" id="GO:0006744">
    <property type="term" value="P:ubiquinone biosynthetic process"/>
    <property type="evidence" value="ECO:0000314"/>
    <property type="project" value="UniProtKB"/>
</dbReference>
<dbReference type="CDD" id="cd13959">
    <property type="entry name" value="PT_UbiA_COQ2"/>
    <property type="match status" value="1"/>
</dbReference>
<dbReference type="FunFam" id="1.10.357.140:FF:000003">
    <property type="entry name" value="4-hydroxybenzoate polyprenyltransferase, mitochondrial"/>
    <property type="match status" value="1"/>
</dbReference>
<dbReference type="Gene3D" id="1.10.357.140">
    <property type="entry name" value="UbiA prenyltransferase"/>
    <property type="match status" value="1"/>
</dbReference>
<dbReference type="HAMAP" id="MF_01635">
    <property type="entry name" value="UbiA"/>
    <property type="match status" value="1"/>
</dbReference>
<dbReference type="InterPro" id="IPR006370">
    <property type="entry name" value="HB_polyprenyltransferase-like"/>
</dbReference>
<dbReference type="InterPro" id="IPR039653">
    <property type="entry name" value="Prenyltransferase"/>
</dbReference>
<dbReference type="InterPro" id="IPR000537">
    <property type="entry name" value="UbiA_prenyltransferase"/>
</dbReference>
<dbReference type="InterPro" id="IPR030470">
    <property type="entry name" value="UbiA_prenylTrfase_CS"/>
</dbReference>
<dbReference type="InterPro" id="IPR044878">
    <property type="entry name" value="UbiA_sf"/>
</dbReference>
<dbReference type="NCBIfam" id="TIGR01474">
    <property type="entry name" value="ubiA_proteo"/>
    <property type="match status" value="1"/>
</dbReference>
<dbReference type="PANTHER" id="PTHR11048:SF28">
    <property type="entry name" value="4-HYDROXYBENZOATE POLYPRENYLTRANSFERASE, MITOCHONDRIAL"/>
    <property type="match status" value="1"/>
</dbReference>
<dbReference type="PANTHER" id="PTHR11048">
    <property type="entry name" value="PRENYLTRANSFERASES"/>
    <property type="match status" value="1"/>
</dbReference>
<dbReference type="Pfam" id="PF01040">
    <property type="entry name" value="UbiA"/>
    <property type="match status" value="1"/>
</dbReference>
<dbReference type="PROSITE" id="PS00943">
    <property type="entry name" value="UBIA"/>
    <property type="match status" value="1"/>
</dbReference>
<organism>
    <name type="scientific">Homo sapiens</name>
    <name type="common">Human</name>
    <dbReference type="NCBI Taxonomy" id="9606"/>
    <lineage>
        <taxon>Eukaryota</taxon>
        <taxon>Metazoa</taxon>
        <taxon>Chordata</taxon>
        <taxon>Craniata</taxon>
        <taxon>Vertebrata</taxon>
        <taxon>Euteleostomi</taxon>
        <taxon>Mammalia</taxon>
        <taxon>Eutheria</taxon>
        <taxon>Euarchontoglires</taxon>
        <taxon>Primates</taxon>
        <taxon>Haplorrhini</taxon>
        <taxon>Catarrhini</taxon>
        <taxon>Hominidae</taxon>
        <taxon>Homo</taxon>
    </lineage>
</organism>
<accession>Q96H96</accession>
<accession>A0A1D8H0A6</accession>
<accession>O95331</accession>
<accession>Q1JQ78</accession>
<accession>Q684R2</accession>
<sequence>MLGSRAAGFARGLRAVALAWLPGWRGRSFALARAAGAPHGGDLQPPACPEPRGRQLSLSAAAVVDSAPRPLQPYLRLMRLDKPIGTWLLYLPCTWSIGLAAEPGCFPDWYMLSLFGTGAILMRGAGCTINDMWDQDYDKKVTRTANRPIAAGDISTFQSFVFLGGQLTLALGVLLCLNYYSIALGAGSLLLVITYPLMKRISYWPQLALGLTFNWGALLGWSAIKGSCDPSVCLPLYFSGVMWTLIYDTIYAHQDKRDDVLIGLKSTALRFGENTKPWLSGFSVAMLGALSLVGVNSGQTAPYYAALGAVGAHLTHQIYTLDIHRPEDCWNKFISNRTLGLIVFLGIVLGNLWKEKKTDKTKKGIENKIEN</sequence>
<reference key="1">
    <citation type="journal article" date="2004" name="Biochem. J.">
        <title>Isolation and functional expression of human COQ2, a gene encoding a polyprenyl transferase involved in the synthesis of CoQ2.</title>
        <authorList>
            <person name="Forsgren M."/>
            <person name="Attersand A."/>
            <person name="Lake S."/>
            <person name="Gruenler J."/>
            <person name="Swiezewska E."/>
            <person name="Dallner G."/>
            <person name="Climent I."/>
        </authorList>
    </citation>
    <scope>NUCLEOTIDE SEQUENCE [MRNA] (ISOFORM 4)</scope>
    <scope>FUNCTION</scope>
    <scope>CATALYTIC ACTIVITY</scope>
    <scope>TISSUE SPECIFICITY</scope>
    <scope>PATHWAY</scope>
    <scope>VARIANT LEU-16</scope>
    <source>
        <tissue>Liver</tissue>
        <tissue>Muscle</tissue>
    </source>
</reference>
<reference key="2">
    <citation type="journal article" date="2016" name="Hum. Mol. Genet.">
        <title>The COQ2 genotype predicts the severity of coenzyme Q10 deficiency.</title>
        <authorList>
            <person name="Desbats M.A."/>
            <person name="Morbidoni V."/>
            <person name="Silic-Benussi M."/>
            <person name="Doimo M."/>
            <person name="Ciminale V."/>
            <person name="Cassina M."/>
            <person name="Sacconi S."/>
            <person name="Hirano M."/>
            <person name="Basso G."/>
            <person name="Pierrel F."/>
            <person name="Navas P."/>
            <person name="Salviati L."/>
            <person name="Trevisson E."/>
        </authorList>
    </citation>
    <scope>NUCLEOTIDE SEQUENCE [MRNA] (ISOFORM 1)</scope>
    <scope>ALTERNATIVE SPLICING (ISOFORMS 4; 5 AND 6)</scope>
    <scope>FUNCTION</scope>
    <scope>SUBCELLULAR LOCATION</scope>
    <scope>TOPOLOGY</scope>
    <scope>CHARACTERIZATION OF VARIANTS COQ10D1 VAL-78; ASN-96; ARG-132; HIS-147; SER-178; CYS-247 AND VAL-252</scope>
    <scope>CATALYTIC ACTIVITY</scope>
</reference>
<reference key="3">
    <citation type="journal article" date="2005" name="Nature">
        <title>Generation and annotation of the DNA sequences of human chromosomes 2 and 4.</title>
        <authorList>
            <person name="Hillier L.W."/>
            <person name="Graves T.A."/>
            <person name="Fulton R.S."/>
            <person name="Fulton L.A."/>
            <person name="Pepin K.H."/>
            <person name="Minx P."/>
            <person name="Wagner-McPherson C."/>
            <person name="Layman D."/>
            <person name="Wylie K."/>
            <person name="Sekhon M."/>
            <person name="Becker M.C."/>
            <person name="Fewell G.A."/>
            <person name="Delehaunty K.D."/>
            <person name="Miner T.L."/>
            <person name="Nash W.E."/>
            <person name="Kremitzki C."/>
            <person name="Oddy L."/>
            <person name="Du H."/>
            <person name="Sun H."/>
            <person name="Bradshaw-Cordum H."/>
            <person name="Ali J."/>
            <person name="Carter J."/>
            <person name="Cordes M."/>
            <person name="Harris A."/>
            <person name="Isak A."/>
            <person name="van Brunt A."/>
            <person name="Nguyen C."/>
            <person name="Du F."/>
            <person name="Courtney L."/>
            <person name="Kalicki J."/>
            <person name="Ozersky P."/>
            <person name="Abbott S."/>
            <person name="Armstrong J."/>
            <person name="Belter E.A."/>
            <person name="Caruso L."/>
            <person name="Cedroni M."/>
            <person name="Cotton M."/>
            <person name="Davidson T."/>
            <person name="Desai A."/>
            <person name="Elliott G."/>
            <person name="Erb T."/>
            <person name="Fronick C."/>
            <person name="Gaige T."/>
            <person name="Haakenson W."/>
            <person name="Haglund K."/>
            <person name="Holmes A."/>
            <person name="Harkins R."/>
            <person name="Kim K."/>
            <person name="Kruchowski S.S."/>
            <person name="Strong C.M."/>
            <person name="Grewal N."/>
            <person name="Goyea E."/>
            <person name="Hou S."/>
            <person name="Levy A."/>
            <person name="Martinka S."/>
            <person name="Mead K."/>
            <person name="McLellan M.D."/>
            <person name="Meyer R."/>
            <person name="Randall-Maher J."/>
            <person name="Tomlinson C."/>
            <person name="Dauphin-Kohlberg S."/>
            <person name="Kozlowicz-Reilly A."/>
            <person name="Shah N."/>
            <person name="Swearengen-Shahid S."/>
            <person name="Snider J."/>
            <person name="Strong J.T."/>
            <person name="Thompson J."/>
            <person name="Yoakum M."/>
            <person name="Leonard S."/>
            <person name="Pearman C."/>
            <person name="Trani L."/>
            <person name="Radionenko M."/>
            <person name="Waligorski J.E."/>
            <person name="Wang C."/>
            <person name="Rock S.M."/>
            <person name="Tin-Wollam A.-M."/>
            <person name="Maupin R."/>
            <person name="Latreille P."/>
            <person name="Wendl M.C."/>
            <person name="Yang S.-P."/>
            <person name="Pohl C."/>
            <person name="Wallis J.W."/>
            <person name="Spieth J."/>
            <person name="Bieri T.A."/>
            <person name="Berkowicz N."/>
            <person name="Nelson J.O."/>
            <person name="Osborne J."/>
            <person name="Ding L."/>
            <person name="Meyer R."/>
            <person name="Sabo A."/>
            <person name="Shotland Y."/>
            <person name="Sinha P."/>
            <person name="Wohldmann P.E."/>
            <person name="Cook L.L."/>
            <person name="Hickenbotham M.T."/>
            <person name="Eldred J."/>
            <person name="Williams D."/>
            <person name="Jones T.A."/>
            <person name="She X."/>
            <person name="Ciccarelli F.D."/>
            <person name="Izaurralde E."/>
            <person name="Taylor J."/>
            <person name="Schmutz J."/>
            <person name="Myers R.M."/>
            <person name="Cox D.R."/>
            <person name="Huang X."/>
            <person name="McPherson J.D."/>
            <person name="Mardis E.R."/>
            <person name="Clifton S.W."/>
            <person name="Warren W.C."/>
            <person name="Chinwalla A.T."/>
            <person name="Eddy S.R."/>
            <person name="Marra M.A."/>
            <person name="Ovcharenko I."/>
            <person name="Furey T.S."/>
            <person name="Miller W."/>
            <person name="Eichler E.E."/>
            <person name="Bork P."/>
            <person name="Suyama M."/>
            <person name="Torrents D."/>
            <person name="Waterston R.H."/>
            <person name="Wilson R.K."/>
        </authorList>
    </citation>
    <scope>NUCLEOTIDE SEQUENCE [LARGE SCALE GENOMIC DNA]</scope>
</reference>
<reference key="4">
    <citation type="journal article" date="2004" name="Genome Res.">
        <title>The status, quality, and expansion of the NIH full-length cDNA project: the Mammalian Gene Collection (MGC).</title>
        <authorList>
            <consortium name="The MGC Project Team"/>
        </authorList>
    </citation>
    <scope>NUCLEOTIDE SEQUENCE [LARGE SCALE MRNA] (ISOFORM 1)</scope>
    <scope>VARIANT LEU-16</scope>
    <source>
        <tissue>Lung</tissue>
        <tissue>Melanoma</tissue>
        <tissue>Pancreatic carcinoma</tissue>
    </source>
</reference>
<reference key="5">
    <citation type="submission" date="1998-08" db="EMBL/GenBank/DDBJ databases">
        <title>Full-insert sequence of mapped XREF EST.</title>
        <authorList>
            <person name="Barrow I.K.-P."/>
            <person name="Boguski M.S."/>
            <person name="Touchman J.W."/>
            <person name="Spencer F."/>
        </authorList>
    </citation>
    <scope>NUCLEOTIDE SEQUENCE [LARGE SCALE MRNA] OF 104-334 (ISOFORM 3)</scope>
</reference>
<reference key="6">
    <citation type="submission" date="2004-06" db="EMBL/GenBank/DDBJ databases">
        <title>Cloning of human full open reading frames in Gateway(TM) system entry vector (pDONR201).</title>
        <authorList>
            <person name="Ebert L."/>
            <person name="Schick M."/>
            <person name="Neubert P."/>
            <person name="Schatten R."/>
            <person name="Henze S."/>
            <person name="Korn B."/>
        </authorList>
    </citation>
    <scope>NUCLEOTIDE SEQUENCE [LARGE SCALE MRNA] OF 198-371 (ISOFORM 3)</scope>
</reference>
<reference key="7">
    <citation type="journal article" date="2007" name="Hum. Mol. Genet.">
        <title>Missense mutation of the COQ2 gene causes defects of bioenergetics and de novo pyrimidine synthesis.</title>
        <authorList>
            <person name="Lopez-Martin J.M."/>
            <person name="Salviati L."/>
            <person name="Trevisson E."/>
            <person name="Montini G."/>
            <person name="DiMauro S."/>
            <person name="Quinzii C."/>
            <person name="Hirano M."/>
            <person name="Rodriguez-Hernandez A."/>
            <person name="Cordero M.D."/>
            <person name="Sanchez-Alcazar J.A."/>
            <person name="Santos-Ocana C."/>
            <person name="Navas P."/>
        </authorList>
    </citation>
    <scope>CHARACTERIZATION OF VARIANTS COQ10D1 CYS-247</scope>
    <scope>FUNCTION</scope>
    <scope>CATALYTIC ACTIVITY</scope>
    <scope>PATHWAY</scope>
</reference>
<reference key="8">
    <citation type="journal article" date="2010" name="Nat. Chem. Biol.">
        <title>4-Nitrobenzoate inhibits coenzyme Q biosynthesis in mammalian cell cultures.</title>
        <authorList>
            <person name="Forsman U."/>
            <person name="Sjoeberg M."/>
            <person name="Turunen M."/>
            <person name="Sindelar P.J."/>
        </authorList>
    </citation>
    <scope>FUNCTION</scope>
    <scope>CATALYTIC ACTIVITY</scope>
</reference>
<reference key="9">
    <citation type="journal article" date="2006" name="Am. J. Hum. Genet.">
        <title>A mutation in para-hydroxybenzoate-polyprenyl transferase (COQ2) causes primary coenzyme Q10 deficiency.</title>
        <authorList>
            <person name="Quinzii C."/>
            <person name="Naini A."/>
            <person name="Salviati L."/>
            <person name="Trevisson E."/>
            <person name="Navas P."/>
            <person name="Dimauro S."/>
            <person name="Hirano M."/>
        </authorList>
    </citation>
    <scope>VARIANT COQ10D1 CYS-247</scope>
    <scope>CHARACTERIZATION OF VARIANT COQ10D1 CYS-247</scope>
    <scope>FUNCTION</scope>
    <scope>CATALYTIC ACTIVITY</scope>
    <scope>PATHWAY</scope>
</reference>
<reference key="10">
    <citation type="journal article" date="2007" name="J. Am. Soc. Nephrol.">
        <title>COQ2 nephropathy: a newly described inherited mitochondriopathy with primary renal involvement.</title>
        <authorList>
            <person name="Diomedi-Camassei F."/>
            <person name="Di Giandomenico S."/>
            <person name="Santorelli F.M."/>
            <person name="Caridi G."/>
            <person name="Piemonte F."/>
            <person name="Montini G."/>
            <person name="Ghiggeri G.M."/>
            <person name="Murer L."/>
            <person name="Barisoni L."/>
            <person name="Pastore A."/>
            <person name="Muda A.O."/>
            <person name="Valente M.L."/>
            <person name="Bertini E."/>
            <person name="Emma F."/>
        </authorList>
    </citation>
    <scope>VARIANTS COQ10D1 ASN-96; HIS-147; SER-178 AND CYS-247</scope>
</reference>
<reference key="11">
    <citation type="journal article" date="2013" name="J. Neurol. Sci.">
        <title>A novel mutation in COQ2 leading to fatal infantile multisystem disease.</title>
        <authorList>
            <person name="Jakobs B.S."/>
            <person name="van den Heuvel L.P."/>
            <person name="Smeets R.J."/>
            <person name="de Vries M.C."/>
            <person name="Hien S."/>
            <person name="Schaible T."/>
            <person name="Smeitink J.A."/>
            <person name="Wevers R.A."/>
            <person name="Wortmann S.B."/>
            <person name="Rodenburg R.J."/>
        </authorList>
    </citation>
    <scope>VARIANT COQ10D1 VAL-252</scope>
</reference>
<reference key="12">
    <citation type="journal article" date="2013" name="N. Engl. J. Med.">
        <title>Mutations in COQ2 in familial and sporadic multiple-system atrophy.</title>
        <authorList>
            <consortium name="Multiple-System Atrophy Research Collaboration"/>
        </authorList>
    </citation>
    <scope>VARIANTS MSA1 LEU-29; HIS-49; THR-57; VAL-78; THR-97; SER-107; PHE-113; ALA-267; CYS-297; GLN-337 AND ALA-343</scope>
    <scope>VARIANTS LEU-16; LEU-22; HIS-69 AND HIS-336</scope>
</reference>
<reference key="13">
    <citation type="journal article" date="2015" name="Eur. J. Hum. Genet.">
        <title>Primary coenzyme Q10 deficiency presenting as fatal neonatal multiorgan failure.</title>
        <authorList>
            <person name="Desbats M.A."/>
            <person name="Vetro A."/>
            <person name="Limongelli I."/>
            <person name="Lunardi G."/>
            <person name="Casarin A."/>
            <person name="Doimo M."/>
            <person name="Spinazzi M."/>
            <person name="Angelini C."/>
            <person name="Cenacchi G."/>
            <person name="Burlina A."/>
            <person name="Rodriguez Hernandez M.A."/>
            <person name="Chiandetti L."/>
            <person name="Clementi M."/>
            <person name="Trevisson E."/>
            <person name="Navas P."/>
            <person name="Zuffardi O."/>
            <person name="Salviati L."/>
        </authorList>
    </citation>
    <scope>VARIANT COQ10D1 ARG-132</scope>
</reference>
<reference key="14">
    <citation type="journal article" date="2017" name="Clin. Genet.">
        <title>Further phenotypic heterogeneity of CoQ10 deficiency associated with steroid resistant nephrotic syndrome and novel COQ2 and COQ6 variants.</title>
        <authorList>
            <person name="Gigante M."/>
            <person name="Diella S."/>
            <person name="Santangelo L."/>
            <person name="Trevisson E."/>
            <person name="Acosta M.J."/>
            <person name="Amatruda M."/>
            <person name="Finzi G."/>
            <person name="Caridi G."/>
            <person name="Murer L."/>
            <person name="Accetturo M."/>
            <person name="Ranieri E."/>
            <person name="Ghiggeri G.M."/>
            <person name="Giordano M."/>
            <person name="Grandaliano G."/>
            <person name="Salviati L."/>
            <person name="Gesualdo L."/>
        </authorList>
    </citation>
    <scope>VARIANT COQ10D1 ALA-340</scope>
</reference>
<reference key="15">
    <citation type="journal article" date="2021" name="Am. J. Med. Genet. A">
        <title>Clinical spectrum in multiple families with primary COQ10 deficiency.</title>
        <authorList>
            <person name="Hashemi S.S."/>
            <person name="Zare-Abdollahi D."/>
            <person name="Bakhshandeh M.K."/>
            <person name="Vafaee A."/>
            <person name="Abolhasani S."/>
            <person name="Inanloo Rahatloo K."/>
            <person name="DanaeeFard F."/>
            <person name="Farboodi N."/>
            <person name="Rohani M."/>
            <person name="Alavi A."/>
        </authorList>
    </citation>
    <scope>VARIANT COQ10D1 SER-53</scope>
</reference>
<gene>
    <name evidence="2 15" type="primary">COQ2</name>
    <name type="synonym">CL640</name>
</gene>
<comment type="function">
    <text evidence="1 3 5 6 8 12 15 16 17">Mediates the second step in the final reaction sequence of coenzyme Q (CoQ) biosynthesis (PubMed:15153069, PubMed:16400613, PubMed:17374725, PubMed:20526342). Catalyzes the prenylation of para-hydroxybenzoate (PHB) with an all-trans polyprenyl donor (such as all-trans-decaprenyl diphosphate) (PubMed:15153069, PubMed:16400613, PubMed:17374725, PubMed:20526342). The length of the polyprenyl side chain varies depending on the species, in humans, the side chain is comprised of 10 isoprenyls (decaprenyl) producing CoQ10 (also known as ubiquinone), whereas rodents predominantly generate CoQ9 (PubMed:15153069, PubMed:16400613). However, this specificity is not complete, human tissues have low amounts of CoQ9 and rodent organs contain some CoQ10 (PubMed:15153069). Plays a central role in the biosynthesis of CoQ10 (PubMed:15153069, PubMed:16400613, PubMed:17374725). CoQ10 is a vital molecule that transports electrons from mitochondrial respiratory chain complexes (PubMed:16400613, PubMed:17374725, PubMed:27493029). CoQs also function as cofactors for uncoupling protein and play a role as regulators of the extracellularly-induced ceramide-dependent apoptotic pathway (PubMed:16400613, PubMed:17374725). Regulates mitochondrial permeability transition pore (mPTP) opening and ROS production (pivotal events in cell death) in a tissue specific manner (By similarity).</text>
</comment>
<comment type="catalytic activity">
    <reaction evidence="3 5 6 22 23">
        <text>an all-trans-polyprenyl diphosphate + 4-hydroxybenzoate = a 4-hydroxy-3-(all-trans-polyprenyl)benzoate + diphosphate</text>
        <dbReference type="Rhea" id="RHEA:44504"/>
        <dbReference type="Rhea" id="RHEA-COMP:9514"/>
        <dbReference type="Rhea" id="RHEA-COMP:9564"/>
        <dbReference type="ChEBI" id="CHEBI:17879"/>
        <dbReference type="ChEBI" id="CHEBI:33019"/>
        <dbReference type="ChEBI" id="CHEBI:58914"/>
        <dbReference type="ChEBI" id="CHEBI:78396"/>
        <dbReference type="EC" id="2.5.1.39"/>
    </reaction>
    <physiologicalReaction direction="left-to-right" evidence="3 5 6 22 23">
        <dbReference type="Rhea" id="RHEA:44505"/>
    </physiologicalReaction>
</comment>
<comment type="catalytic activity">
    <reaction evidence="3 5 6 22">
        <text>all-trans-decaprenyl diphosphate + 4-hydroxybenzoate = 4-hydroxy-3-(all-trans-decaprenyl)benzoate + diphosphate</text>
        <dbReference type="Rhea" id="RHEA:44564"/>
        <dbReference type="ChEBI" id="CHEBI:17879"/>
        <dbReference type="ChEBI" id="CHEBI:33019"/>
        <dbReference type="ChEBI" id="CHEBI:60721"/>
        <dbReference type="ChEBI" id="CHEBI:84503"/>
        <dbReference type="EC" id="2.5.1.39"/>
    </reaction>
    <physiologicalReaction direction="left-to-right" evidence="3 5 6 22">
        <dbReference type="Rhea" id="RHEA:44565"/>
    </physiologicalReaction>
</comment>
<comment type="catalytic activity">
    <reaction evidence="3">
        <text>all-trans-nonaprenyl diphosphate + 4-hydroxybenzoate = 4-hydroxy-3-(all-trans-nonaprenyl)benzoate + diphosphate</text>
        <dbReference type="Rhea" id="RHEA:17709"/>
        <dbReference type="ChEBI" id="CHEBI:17879"/>
        <dbReference type="ChEBI" id="CHEBI:33019"/>
        <dbReference type="ChEBI" id="CHEBI:58391"/>
        <dbReference type="ChEBI" id="CHEBI:84502"/>
        <dbReference type="EC" id="2.5.1.39"/>
    </reaction>
    <physiologicalReaction direction="left-to-right" evidence="3">
        <dbReference type="Rhea" id="RHEA:17710"/>
    </physiologicalReaction>
</comment>
<comment type="cofactor">
    <cofactor evidence="2">
        <name>Mg(2+)</name>
        <dbReference type="ChEBI" id="CHEBI:18420"/>
    </cofactor>
</comment>
<comment type="pathway">
    <text evidence="5 6 21">Cofactor biosynthesis; ubiquinone biosynthesis.</text>
</comment>
<comment type="subcellular location">
    <subcellularLocation>
        <location evidence="2 12">Mitochondrion inner membrane</location>
        <topology evidence="2">Multi-pass membrane protein</topology>
        <orientation evidence="2">Matrix side</orientation>
    </subcellularLocation>
</comment>
<comment type="alternative products">
    <event type="alternative splicing"/>
    <event type="alternative initiation"/>
    <isoform>
        <id>Q96H96-1</id>
        <name>1</name>
        <sequence type="displayed"/>
    </isoform>
    <isoform>
        <id>Q96H96-3</id>
        <name>3</name>
        <sequence type="described" ref="VSP_017677 VSP_017678"/>
    </isoform>
    <isoform>
        <id>Q96H96-4</id>
        <name>4</name>
        <sequence type="described" ref="VSP_061606"/>
    </isoform>
    <isoform>
        <id>Q96H96-5</id>
        <name>5</name>
        <sequence type="described" ref="VSP_061607"/>
    </isoform>
    <isoform>
        <id>Q96H96-6</id>
        <name>6</name>
        <sequence type="described" ref="VSP_061608"/>
    </isoform>
</comment>
<comment type="tissue specificity">
    <text evidence="3">Widely expressed. Present in all of the tissues tested. Expressed at higher level in skeletal muscle, adrenal glands and the heart.</text>
</comment>
<comment type="disease" evidence="5 6 7 9 11 12 13 14">
    <disease id="DI-01354">
        <name>Coenzyme Q10 deficiency, primary, 1</name>
        <acronym>COQ10D1</acronym>
        <description>An autosomal recessive disorder with variable manifestations consistent with 5 major phenotypes. The phenotypes include an encephalomyopathic form with seizures and ataxia; a multisystem infantile form with encephalopathy, cardiomyopathy and renal failure; a predominantly cerebellar form with ataxia and cerebellar atrophy; Leigh syndrome with growth retardation; and an isolated myopathic form.</description>
        <dbReference type="MIM" id="607426"/>
    </disease>
    <text>The disease is caused by variants affecting the gene represented in this entry.</text>
</comment>
<comment type="disease" evidence="10">
    <disease id="DI-03867">
        <name>Multiple system atrophy 1</name>
        <acronym>MSA1</acronym>
        <description>A progressive neurodegenerative disorder clinically characterized by parkinsonism, cerebellar ataxia, and autonomic, urogenital, and pyramidal dysfunction in various combinations. Pathologically, it is characterized by degeneration of striatonigral and olivopontocerebellar structures, and glial cytoplasmic inclusions that consist of abnormally phosphorylated alpha-synuclein or tau.</description>
        <dbReference type="MIM" id="146500"/>
    </disease>
    <text>Disease susceptibility is associated with variants affecting the gene represented in this entry.</text>
</comment>
<comment type="miscellaneous">
    <molecule>Isoform 4</molecule>
    <text evidence="23">Potential minor and functional isoform produced by alternative initiation.</text>
</comment>
<comment type="miscellaneous">
    <molecule>Isoform 5</molecule>
    <text evidence="23">Potential minor and functional isoform produced by alternative initiation.</text>
</comment>
<comment type="miscellaneous">
    <molecule>Isoform 6</molecule>
    <text evidence="23">Potential minor and functional isoform produced by alternative initiation.</text>
</comment>
<comment type="similarity">
    <text evidence="2">Belongs to the UbiA prenyltransferase family.</text>
</comment>
<comment type="sequence caution" evidence="20">
    <conflict type="frameshift">
        <sequence resource="EMBL-CDS" id="AAC72955"/>
    </conflict>
</comment>
<comment type="sequence caution" evidence="20">
    <conflict type="erroneous initiation">
        <sequence resource="EMBL-CDS" id="AAH20728"/>
    </conflict>
    <text>Extended N-terminus.</text>
</comment>
<evidence type="ECO:0000250" key="1">
    <source>
        <dbReference type="UniProtKB" id="Q499N4"/>
    </source>
</evidence>
<evidence type="ECO:0000255" key="2">
    <source>
        <dbReference type="HAMAP-Rule" id="MF_03189"/>
    </source>
</evidence>
<evidence type="ECO:0000269" key="3">
    <source>
    </source>
</evidence>
<evidence type="ECO:0000269" key="4">
    <source>
    </source>
</evidence>
<evidence type="ECO:0000269" key="5">
    <source>
    </source>
</evidence>
<evidence type="ECO:0000269" key="6">
    <source>
    </source>
</evidence>
<evidence type="ECO:0000269" key="7">
    <source>
    </source>
</evidence>
<evidence type="ECO:0000269" key="8">
    <source>
    </source>
</evidence>
<evidence type="ECO:0000269" key="9">
    <source>
    </source>
</evidence>
<evidence type="ECO:0000269" key="10">
    <source>
    </source>
</evidence>
<evidence type="ECO:0000269" key="11">
    <source>
    </source>
</evidence>
<evidence type="ECO:0000269" key="12">
    <source>
    </source>
</evidence>
<evidence type="ECO:0000269" key="13">
    <source>
    </source>
</evidence>
<evidence type="ECO:0000269" key="14">
    <source>
    </source>
</evidence>
<evidence type="ECO:0000303" key="15">
    <source>
    </source>
</evidence>
<evidence type="ECO:0000303" key="16">
    <source>
    </source>
</evidence>
<evidence type="ECO:0000303" key="17">
    <source>
    </source>
</evidence>
<evidence type="ECO:0000303" key="18">
    <source ref="5"/>
</evidence>
<evidence type="ECO:0000303" key="19">
    <source ref="6"/>
</evidence>
<evidence type="ECO:0000305" key="20"/>
<evidence type="ECO:0000305" key="21">
    <source>
    </source>
</evidence>
<evidence type="ECO:0000305" key="22">
    <source>
    </source>
</evidence>
<evidence type="ECO:0000305" key="23">
    <source>
    </source>
</evidence>